<keyword id="KW-0004">4Fe-4S</keyword>
<keyword id="KW-0045">Antibiotic biosynthesis</keyword>
<keyword id="KW-0846">Cobalamin</keyword>
<keyword id="KW-0170">Cobalt</keyword>
<keyword id="KW-0408">Iron</keyword>
<keyword id="KW-0411">Iron-sulfur</keyword>
<keyword id="KW-0479">Metal-binding</keyword>
<keyword id="KW-0489">Methyltransferase</keyword>
<keyword id="KW-0949">S-adenosyl-L-methionine</keyword>
<keyword id="KW-0808">Transferase</keyword>
<proteinExistence type="evidence at protein level"/>
<accession>Q56184</accession>
<name>FOM3_STRWE</name>
<comment type="function">
    <text evidence="3 4 5">Involved in fosfomycin biosynthesis (PubMed:17220970, PubMed:24370735, PubMed:28678474). Catalyzes the C-methylation of cytidylyl-2-hydroxyethylphosphonate (HEP-CMP) to form cytidylyl-2-hydroxypropylphosphonate (HPP-CMP). The C-methylation is not stereoselective and the ratio of (S)- to (R)-HPP-CMP is almost equal in vitro (PubMed:28678474).</text>
</comment>
<comment type="catalytic activity">
    <reaction evidence="5">
        <text>cytidine 5'-{[hydroxy(2-hydroxyethyl)phosphonoyl]phosphate} + AH2 + 2 S-adenosyl-L-methionine = cytidine 5'-({hydroxy[(S)-2-hydroxypropyl]phosphonoyl}phosphate) + 5'-deoxyadenosine + L-methionine + A + S-adenosyl-L-homocysteine + 2 H(+)</text>
        <dbReference type="Rhea" id="RHEA:59072"/>
        <dbReference type="ChEBI" id="CHEBI:13193"/>
        <dbReference type="ChEBI" id="CHEBI:15378"/>
        <dbReference type="ChEBI" id="CHEBI:17319"/>
        <dbReference type="ChEBI" id="CHEBI:17499"/>
        <dbReference type="ChEBI" id="CHEBI:57844"/>
        <dbReference type="ChEBI" id="CHEBI:57856"/>
        <dbReference type="ChEBI" id="CHEBI:59789"/>
        <dbReference type="ChEBI" id="CHEBI:142876"/>
        <dbReference type="ChEBI" id="CHEBI:142877"/>
        <dbReference type="EC" id="2.1.1.308"/>
    </reaction>
    <physiologicalReaction direction="left-to-right" evidence="5">
        <dbReference type="Rhea" id="RHEA:59073"/>
    </physiologicalReaction>
</comment>
<comment type="cofactor">
    <cofactor evidence="4 5">
        <name>[4Fe-4S] cluster</name>
        <dbReference type="ChEBI" id="CHEBI:49883"/>
    </cofactor>
    <text evidence="4">Binds 1 [4Fe-4S] cluster. The cluster is coordinated with 3 cysteines and an exchangeable S-adenosyl-L-methionine.</text>
</comment>
<comment type="cofactor">
    <cofactor evidence="5">
        <name>methylcob(III)alamin</name>
        <dbReference type="ChEBI" id="CHEBI:28115"/>
    </cofactor>
</comment>
<comment type="biophysicochemical properties">
    <kinetics>
        <KM evidence="5">113 uM for HEP-CMP</KM>
        <text evidence="5">kcat is 0.89 h(-1).</text>
    </kinetics>
</comment>
<comment type="pathway">
    <text evidence="3 5 11">Antibiotic biosynthesis; fosfomycin biosynthesis.</text>
</comment>
<comment type="disruption phenotype">
    <text evidence="3">Disruption mutant does not produce fosfomycin.</text>
</comment>
<comment type="miscellaneous">
    <text evidence="6">Was originally thought to catalyze the C-methylation of 2-hydroxyethylphosphonate (2-HEP) to form 2-hydroxypropylphosphonate (2-HPP).</text>
</comment>
<comment type="similarity">
    <text evidence="9">Belongs to the radical SAM superfamily.</text>
</comment>
<protein>
    <recommendedName>
        <fullName evidence="9">Cytidylyl-2-hydroxyethylphosphonate methyltransferase</fullName>
        <ecNumber evidence="5">2.1.1.308</ecNumber>
    </recommendedName>
    <alternativeName>
        <fullName evidence="7">MeCbl-dependent radical SAM C-methyltransferase Fom3</fullName>
    </alternativeName>
</protein>
<sequence length="534" mass="60374">MTIGSLGSTEFALHGKPAIRWGDLPQRVGKPETRRYQKVLLLNPSATLFRHDLPRCTYPLGLGYIAAVLEKYGYEVKILDVFAEGYYNAQPVDGDDQFLRYGLSDDDIVKVMKEFGPDVVGISSIFSNQADNVHHLLKLADLVTPEAVTAIGGAHARYFPKACLDDPNLDAVFLGEGEMTFLLWMEHLNGNVSDDEVHGIAWRDRDGKVQIKPELPLISSMRPEGPETGKSSPMLSMAGELDHIPFPAWHHYNMEKYFEIKAYQSPYTVGSRVGQLYTSRGCTAHCTFCTTTHFWGQKLRRRSVQDVVDEVLRLRDEYGIDEFHIQDDNITNDMDHARELFRAFKEVGLPWATPQGTALWRMDEELLDLMAESGAYQVTFAIESGVQRVLKELIKKPLNLERTSHLIKYARSLGMHVHGFFIIGMPPMCGNAGESIEEMQASYDYAEEAGFSSASFFAASPIVGSELLRECIRQGFVDPEESLYRMTYKQGIINVPGLWDGEEIAELAAKFNRDFNARRDRAYTPQKQWNANQY</sequence>
<organism>
    <name type="scientific">Streptomyces wedmorensis</name>
    <dbReference type="NCBI Taxonomy" id="43759"/>
    <lineage>
        <taxon>Bacteria</taxon>
        <taxon>Bacillati</taxon>
        <taxon>Actinomycetota</taxon>
        <taxon>Actinomycetes</taxon>
        <taxon>Kitasatosporales</taxon>
        <taxon>Streptomycetaceae</taxon>
        <taxon>Streptomyces</taxon>
    </lineage>
</organism>
<gene>
    <name evidence="8" type="primary">fom3</name>
</gene>
<reference key="1">
    <citation type="journal article" date="1995" name="Mol. Gen. Genet.">
        <title>Cloning and nucleotide sequence of fosfomycin biosynthetic genes of Streptomyces wedmorensis.</title>
        <authorList>
            <person name="Hidaka T."/>
            <person name="Goda M."/>
            <person name="Kuzuyama T."/>
            <person name="Takei N."/>
            <person name="Hidaka M."/>
            <person name="Seto H."/>
        </authorList>
    </citation>
    <scope>NUCLEOTIDE SEQUENCE [GENOMIC DNA]</scope>
    <source>
        <strain>144-91</strain>
    </source>
</reference>
<reference key="2">
    <citation type="journal article" date="2007" name="Chem. Commun. (Camb.)">
        <title>New insight into the mechanism of methyl transfer during the biosynthesis of fosfomycin.</title>
        <authorList>
            <person name="Woodyer R.D."/>
            <person name="Li G."/>
            <person name="Zhao H."/>
            <person name="van der Donk W.A."/>
        </authorList>
    </citation>
    <scope>FUNCTION</scope>
    <scope>PATHWAY</scope>
    <scope>DISRUPTION PHENOTYPE</scope>
</reference>
<reference key="3">
    <citation type="journal article" date="2014" name="Arch. Biochem. Biophys.">
        <title>Initial characterization of Fom3 from Streptomyces wedmorensis: The methyltransferase in fosfomycin biosynthesis.</title>
        <authorList>
            <person name="Allen K.D."/>
            <person name="Wang S.C."/>
        </authorList>
    </citation>
    <scope>PRELIMINARY FUNCTION</scope>
    <scope>COFACTOR</scope>
    <scope>MUTAGENESIS OF CYS-282; CYS-286 AND CYS-289</scope>
</reference>
<reference key="4">
    <citation type="journal article" date="2017" name="Biochemistry">
        <title>Methylcobalamin-dependent radical SAM C-methyltransferase Fom3 recognizes cytidylyl-2-hydroxyethylphosphonate and catalyzes the nonstereoselective C-methylation in fosfomycin biosynthesis.</title>
        <authorList>
            <person name="Sato S."/>
            <person name="Kudo F."/>
            <person name="Kim S.Y."/>
            <person name="Kuzuyama T."/>
            <person name="Eguchi T."/>
        </authorList>
    </citation>
    <scope>FUNCTION</scope>
    <scope>CATALYTIC ACTIVITY</scope>
    <scope>COFACTOR</scope>
    <scope>BIOPHYSICOCHEMICAL PROPERTIES</scope>
    <scope>PATHWAY</scope>
    <source>
        <strain>144-91</strain>
    </source>
</reference>
<reference key="5">
    <citation type="journal article" date="2018" name="Biochemistry">
        <title>A (re)discovery of the Fom3 substrate.</title>
        <authorList>
            <person name="Blaszczyk A.J."/>
            <person name="Booker S.J."/>
        </authorList>
    </citation>
    <scope>PATHWAY</scope>
</reference>
<evidence type="ECO:0000255" key="1">
    <source>
        <dbReference type="PROSITE-ProRule" id="PRU00666"/>
    </source>
</evidence>
<evidence type="ECO:0000255" key="2">
    <source>
        <dbReference type="PROSITE-ProRule" id="PRU01266"/>
    </source>
</evidence>
<evidence type="ECO:0000269" key="3">
    <source>
    </source>
</evidence>
<evidence type="ECO:0000269" key="4">
    <source>
    </source>
</evidence>
<evidence type="ECO:0000269" key="5">
    <source>
    </source>
</evidence>
<evidence type="ECO:0000303" key="6">
    <source>
    </source>
</evidence>
<evidence type="ECO:0000303" key="7">
    <source>
    </source>
</evidence>
<evidence type="ECO:0000303" key="8">
    <source>
    </source>
</evidence>
<evidence type="ECO:0000305" key="9"/>
<evidence type="ECO:0000305" key="10">
    <source>
    </source>
</evidence>
<evidence type="ECO:0000305" key="11">
    <source>
    </source>
</evidence>
<feature type="chain" id="PRO_0000435951" description="Cytidylyl-2-hydroxyethylphosphonate methyltransferase">
    <location>
        <begin position="1"/>
        <end position="534"/>
    </location>
</feature>
<feature type="domain" description="B12-binding" evidence="1">
    <location>
        <begin position="38"/>
        <end position="195"/>
    </location>
</feature>
<feature type="domain" description="Radical SAM core" evidence="2">
    <location>
        <begin position="268"/>
        <end position="496"/>
    </location>
</feature>
<feature type="binding site" evidence="10">
    <location>
        <position position="282"/>
    </location>
    <ligand>
        <name>[4Fe-4S] cluster</name>
        <dbReference type="ChEBI" id="CHEBI:49883"/>
        <note>4Fe-4S-S-AdoMet</note>
    </ligand>
</feature>
<feature type="binding site" evidence="10">
    <location>
        <position position="286"/>
    </location>
    <ligand>
        <name>[4Fe-4S] cluster</name>
        <dbReference type="ChEBI" id="CHEBI:49883"/>
        <note>4Fe-4S-S-AdoMet</note>
    </ligand>
</feature>
<feature type="binding site" evidence="10">
    <location>
        <position position="289"/>
    </location>
    <ligand>
        <name>[4Fe-4S] cluster</name>
        <dbReference type="ChEBI" id="CHEBI:49883"/>
        <note>4Fe-4S-S-AdoMet</note>
    </ligand>
</feature>
<feature type="mutagenesis site" description="Lacks the [4Fe-4S] cluster; when associated with A-286 and A-289." evidence="4">
    <original>C</original>
    <variation>A</variation>
    <location>
        <position position="282"/>
    </location>
</feature>
<feature type="mutagenesis site" description="Lacks the [4Fe-4S] cluster; when associated with A-282 and A-289." evidence="4">
    <original>C</original>
    <variation>A</variation>
    <location>
        <position position="286"/>
    </location>
</feature>
<feature type="mutagenesis site" description="Lacks the [4Fe-4S] cluster; when associated with A-282 and A-286." evidence="4">
    <original>C</original>
    <variation>A</variation>
    <location>
        <position position="289"/>
    </location>
</feature>
<dbReference type="EC" id="2.1.1.308" evidence="5"/>
<dbReference type="EMBL" id="AB016934">
    <property type="protein sequence ID" value="BAA32490.1"/>
    <property type="molecule type" value="Genomic_DNA"/>
</dbReference>
<dbReference type="PIR" id="S60205">
    <property type="entry name" value="S60205"/>
</dbReference>
<dbReference type="SMR" id="Q56184"/>
<dbReference type="KEGG" id="ag:BAA32490"/>
<dbReference type="BRENDA" id="2.1.1.308">
    <property type="organism ID" value="6118"/>
</dbReference>
<dbReference type="UniPathway" id="UPA01071"/>
<dbReference type="GO" id="GO:0005829">
    <property type="term" value="C:cytosol"/>
    <property type="evidence" value="ECO:0007669"/>
    <property type="project" value="TreeGrafter"/>
</dbReference>
<dbReference type="GO" id="GO:0051539">
    <property type="term" value="F:4 iron, 4 sulfur cluster binding"/>
    <property type="evidence" value="ECO:0007669"/>
    <property type="project" value="UniProtKB-KW"/>
</dbReference>
<dbReference type="GO" id="GO:0031419">
    <property type="term" value="F:cobalamin binding"/>
    <property type="evidence" value="ECO:0007669"/>
    <property type="project" value="UniProtKB-KW"/>
</dbReference>
<dbReference type="GO" id="GO:0046872">
    <property type="term" value="F:metal ion binding"/>
    <property type="evidence" value="ECO:0007669"/>
    <property type="project" value="UniProtKB-KW"/>
</dbReference>
<dbReference type="GO" id="GO:0008168">
    <property type="term" value="F:methyltransferase activity"/>
    <property type="evidence" value="ECO:0007669"/>
    <property type="project" value="UniProtKB-KW"/>
</dbReference>
<dbReference type="GO" id="GO:0017000">
    <property type="term" value="P:antibiotic biosynthetic process"/>
    <property type="evidence" value="ECO:0007669"/>
    <property type="project" value="UniProtKB-KW"/>
</dbReference>
<dbReference type="GO" id="GO:0032259">
    <property type="term" value="P:methylation"/>
    <property type="evidence" value="ECO:0007669"/>
    <property type="project" value="UniProtKB-KW"/>
</dbReference>
<dbReference type="CDD" id="cd01335">
    <property type="entry name" value="Radical_SAM"/>
    <property type="match status" value="1"/>
</dbReference>
<dbReference type="CDD" id="cd02068">
    <property type="entry name" value="radical_SAM_B12_BD"/>
    <property type="match status" value="1"/>
</dbReference>
<dbReference type="Gene3D" id="3.40.50.280">
    <property type="entry name" value="Cobalamin-binding domain"/>
    <property type="match status" value="1"/>
</dbReference>
<dbReference type="Gene3D" id="3.80.30.20">
    <property type="entry name" value="tm_1862 like domain"/>
    <property type="match status" value="1"/>
</dbReference>
<dbReference type="InterPro" id="IPR006158">
    <property type="entry name" value="Cobalamin-bd"/>
</dbReference>
<dbReference type="InterPro" id="IPR036724">
    <property type="entry name" value="Cobalamin-bd_sf"/>
</dbReference>
<dbReference type="InterPro" id="IPR006638">
    <property type="entry name" value="Elp3/MiaA/NifB-like_rSAM"/>
</dbReference>
<dbReference type="InterPro" id="IPR034529">
    <property type="entry name" value="Fom3-like"/>
</dbReference>
<dbReference type="InterPro" id="IPR020612">
    <property type="entry name" value="Methylthiotransferase_CS"/>
</dbReference>
<dbReference type="InterPro" id="IPR007197">
    <property type="entry name" value="rSAM"/>
</dbReference>
<dbReference type="InterPro" id="IPR023404">
    <property type="entry name" value="rSAM_horseshoe"/>
</dbReference>
<dbReference type="InterPro" id="IPR051198">
    <property type="entry name" value="Tetrapyrrole_Bchl_Biosynth_MTs"/>
</dbReference>
<dbReference type="PANTHER" id="PTHR43409">
    <property type="entry name" value="ANAEROBIC MAGNESIUM-PROTOPORPHYRIN IX MONOMETHYL ESTER CYCLASE-RELATED"/>
    <property type="match status" value="1"/>
</dbReference>
<dbReference type="PANTHER" id="PTHR43409:SF16">
    <property type="entry name" value="SLR0320 PROTEIN"/>
    <property type="match status" value="1"/>
</dbReference>
<dbReference type="Pfam" id="PF02310">
    <property type="entry name" value="B12-binding"/>
    <property type="match status" value="1"/>
</dbReference>
<dbReference type="Pfam" id="PF04055">
    <property type="entry name" value="Radical_SAM"/>
    <property type="match status" value="1"/>
</dbReference>
<dbReference type="SFLD" id="SFLDF00403">
    <property type="entry name" value="phosphonoacetaldehyde_methylas"/>
    <property type="match status" value="1"/>
</dbReference>
<dbReference type="SFLD" id="SFLDS00029">
    <property type="entry name" value="Radical_SAM"/>
    <property type="match status" value="1"/>
</dbReference>
<dbReference type="SMART" id="SM00729">
    <property type="entry name" value="Elp3"/>
    <property type="match status" value="1"/>
</dbReference>
<dbReference type="SUPFAM" id="SSF52242">
    <property type="entry name" value="Cobalamin (vitamin B12)-binding domain"/>
    <property type="match status" value="1"/>
</dbReference>
<dbReference type="SUPFAM" id="SSF102114">
    <property type="entry name" value="Radical SAM enzymes"/>
    <property type="match status" value="1"/>
</dbReference>
<dbReference type="PROSITE" id="PS51332">
    <property type="entry name" value="B12_BINDING"/>
    <property type="match status" value="1"/>
</dbReference>
<dbReference type="PROSITE" id="PS51918">
    <property type="entry name" value="RADICAL_SAM"/>
    <property type="match status" value="1"/>
</dbReference>